<name>VOSA_MYCMD</name>
<comment type="function">
    <text evidence="2 5">Component of the velB-VosA heterodimeric complex that plays a dual role in activating genes associated with spore maturation and repressing certain development-associated genes (By similarity). The complex binds DNA through the DNA-binding domain of vosA that recognizes an 11-nucleotide consensus sequence 5'-CTGGCCGCGGC-3' consisting of two motifs in the promoters of key developmental regulatory genes (By similarity). Required for gall induction and teliospore formation on seedlings (PubMed:24064149).</text>
</comment>
<comment type="subunit">
    <text evidence="2">Forms a heterodimeric complex with velB; the formation of the VEL2-VOS1 complex is light-dependent (By similarity).</text>
</comment>
<comment type="subcellular location">
    <subcellularLocation>
        <location evidence="2">Nucleus</location>
    </subcellularLocation>
</comment>
<comment type="domain">
    <text evidence="2">The N-terminal velvet domain contains a NF-kappa-B-like fold and is involved in DNA-binding (By similarity).</text>
</comment>
<comment type="disruption phenotype">
    <text evidence="5">Leads to reduced virulence (PubMed:24064149).</text>
</comment>
<comment type="similarity">
    <text evidence="7">Belongs to the velvet family. VosA subfamily.</text>
</comment>
<accession>A0A0D1E9B9</accession>
<reference key="1">
    <citation type="journal article" date="2006" name="Nature">
        <title>Insights from the genome of the biotrophic fungal plant pathogen Ustilago maydis.</title>
        <authorList>
            <person name="Kaemper J."/>
            <person name="Kahmann R."/>
            <person name="Boelker M."/>
            <person name="Ma L.-J."/>
            <person name="Brefort T."/>
            <person name="Saville B.J."/>
            <person name="Banuett F."/>
            <person name="Kronstad J.W."/>
            <person name="Gold S.E."/>
            <person name="Mueller O."/>
            <person name="Perlin M.H."/>
            <person name="Woesten H.A.B."/>
            <person name="de Vries R."/>
            <person name="Ruiz-Herrera J."/>
            <person name="Reynaga-Pena C.G."/>
            <person name="Snetselaar K."/>
            <person name="McCann M."/>
            <person name="Perez-Martin J."/>
            <person name="Feldbruegge M."/>
            <person name="Basse C.W."/>
            <person name="Steinberg G."/>
            <person name="Ibeas J.I."/>
            <person name="Holloman W."/>
            <person name="Guzman P."/>
            <person name="Farman M.L."/>
            <person name="Stajich J.E."/>
            <person name="Sentandreu R."/>
            <person name="Gonzalez-Prieto J.M."/>
            <person name="Kennell J.C."/>
            <person name="Molina L."/>
            <person name="Schirawski J."/>
            <person name="Mendoza-Mendoza A."/>
            <person name="Greilinger D."/>
            <person name="Muench K."/>
            <person name="Roessel N."/>
            <person name="Scherer M."/>
            <person name="Vranes M."/>
            <person name="Ladendorf O."/>
            <person name="Vincon V."/>
            <person name="Fuchs U."/>
            <person name="Sandrock B."/>
            <person name="Meng S."/>
            <person name="Ho E.C.H."/>
            <person name="Cahill M.J."/>
            <person name="Boyce K.J."/>
            <person name="Klose J."/>
            <person name="Klosterman S.J."/>
            <person name="Deelstra H.J."/>
            <person name="Ortiz-Castellanos L."/>
            <person name="Li W."/>
            <person name="Sanchez-Alonso P."/>
            <person name="Schreier P.H."/>
            <person name="Haeuser-Hahn I."/>
            <person name="Vaupel M."/>
            <person name="Koopmann E."/>
            <person name="Friedrich G."/>
            <person name="Voss H."/>
            <person name="Schlueter T."/>
            <person name="Margolis J."/>
            <person name="Platt D."/>
            <person name="Swimmer C."/>
            <person name="Gnirke A."/>
            <person name="Chen F."/>
            <person name="Vysotskaia V."/>
            <person name="Mannhaupt G."/>
            <person name="Gueldener U."/>
            <person name="Muensterkoetter M."/>
            <person name="Haase D."/>
            <person name="Oesterheld M."/>
            <person name="Mewes H.-W."/>
            <person name="Mauceli E.W."/>
            <person name="DeCaprio D."/>
            <person name="Wade C.M."/>
            <person name="Butler J."/>
            <person name="Young S.K."/>
            <person name="Jaffe D.B."/>
            <person name="Calvo S.E."/>
            <person name="Nusbaum C."/>
            <person name="Galagan J.E."/>
            <person name="Birren B.W."/>
        </authorList>
    </citation>
    <scope>NUCLEOTIDE SEQUENCE [LARGE SCALE GENOMIC DNA]</scope>
    <source>
        <strain>DSM 14603 / FGSC 9021 / UM521</strain>
    </source>
</reference>
<reference key="2">
    <citation type="submission" date="2014-09" db="EMBL/GenBank/DDBJ databases">
        <authorList>
            <person name="Gueldener U."/>
            <person name="Muensterkoetter M."/>
            <person name="Walter M.C."/>
            <person name="Mannhaupt G."/>
            <person name="Kahmann R."/>
        </authorList>
    </citation>
    <scope>GENOME REANNOTATION</scope>
    <source>
        <strain>DSM 14603 / FGSC 9021 / UM521</strain>
    </source>
</reference>
<reference key="3">
    <citation type="journal article" date="2013" name="Fungal Genet. Biol.">
        <title>Two members of the Ustilago maydis velvet family influence teliospore development and virulence on maize seedlings.</title>
        <authorList>
            <person name="Karakkat B.B."/>
            <person name="Gold S.E."/>
            <person name="Covert S.F."/>
        </authorList>
    </citation>
    <scope>FUNCTION</scope>
    <scope>DISRUPTION PHENOTYPE</scope>
</reference>
<dbReference type="EMBL" id="CM003141">
    <property type="protein sequence ID" value="KIS70975.1"/>
    <property type="molecule type" value="Genomic_DNA"/>
</dbReference>
<dbReference type="RefSeq" id="XP_011386908.1">
    <property type="nucleotide sequence ID" value="XM_011388606.1"/>
</dbReference>
<dbReference type="SMR" id="A0A0D1E9B9"/>
<dbReference type="EnsemblFungi" id="KIS70975">
    <property type="protein sequence ID" value="KIS70975"/>
    <property type="gene ID" value="UMAG_00893"/>
</dbReference>
<dbReference type="GeneID" id="23562064"/>
<dbReference type="KEGG" id="uma:UMAG_00893"/>
<dbReference type="VEuPathDB" id="FungiDB:UMAG_00893"/>
<dbReference type="eggNOG" id="ENOG502S0HV">
    <property type="taxonomic scope" value="Eukaryota"/>
</dbReference>
<dbReference type="InParanoid" id="A0A0D1E9B9"/>
<dbReference type="OMA" id="WYLENPY"/>
<dbReference type="OrthoDB" id="5599552at2759"/>
<dbReference type="Proteomes" id="UP000000561">
    <property type="component" value="Chromosome 2"/>
</dbReference>
<dbReference type="GO" id="GO:0005634">
    <property type="term" value="C:nucleus"/>
    <property type="evidence" value="ECO:0000318"/>
    <property type="project" value="GO_Central"/>
</dbReference>
<dbReference type="GO" id="GO:0030435">
    <property type="term" value="P:sporulation resulting in formation of a cellular spore"/>
    <property type="evidence" value="ECO:0000318"/>
    <property type="project" value="GO_Central"/>
</dbReference>
<dbReference type="GO" id="GO:0005992">
    <property type="term" value="P:trehalose biosynthetic process"/>
    <property type="evidence" value="ECO:0000318"/>
    <property type="project" value="GO_Central"/>
</dbReference>
<dbReference type="Gene3D" id="2.60.40.3960">
    <property type="entry name" value="Velvet domain"/>
    <property type="match status" value="1"/>
</dbReference>
<dbReference type="InterPro" id="IPR021740">
    <property type="entry name" value="Velvet"/>
</dbReference>
<dbReference type="InterPro" id="IPR037525">
    <property type="entry name" value="Velvet_dom"/>
</dbReference>
<dbReference type="InterPro" id="IPR038491">
    <property type="entry name" value="Velvet_dom_sf"/>
</dbReference>
<dbReference type="PANTHER" id="PTHR33572">
    <property type="entry name" value="SPORE DEVELOPMENT REGULATOR VOSA"/>
    <property type="match status" value="1"/>
</dbReference>
<dbReference type="PANTHER" id="PTHR33572:SF18">
    <property type="entry name" value="SPORE DEVELOPMENT REGULATOR VOSA"/>
    <property type="match status" value="1"/>
</dbReference>
<dbReference type="Pfam" id="PF11754">
    <property type="entry name" value="Velvet"/>
    <property type="match status" value="2"/>
</dbReference>
<dbReference type="PROSITE" id="PS51821">
    <property type="entry name" value="VELVET"/>
    <property type="match status" value="1"/>
</dbReference>
<organism>
    <name type="scientific">Mycosarcoma maydis</name>
    <name type="common">Corn smut fungus</name>
    <name type="synonym">Ustilago maydis</name>
    <dbReference type="NCBI Taxonomy" id="5270"/>
    <lineage>
        <taxon>Eukaryota</taxon>
        <taxon>Fungi</taxon>
        <taxon>Dikarya</taxon>
        <taxon>Basidiomycota</taxon>
        <taxon>Ustilaginomycotina</taxon>
        <taxon>Ustilaginomycetes</taxon>
        <taxon>Ustilaginales</taxon>
        <taxon>Ustilaginaceae</taxon>
        <taxon>Mycosarcoma</taxon>
    </lineage>
</organism>
<protein>
    <recommendedName>
        <fullName evidence="7">Spore development regulator umv1</fullName>
    </recommendedName>
</protein>
<gene>
    <name evidence="6" type="primary">umv1</name>
    <name type="ORF">UMAG_00893</name>
</gene>
<sequence>MSRPESRSGNASTPQGTSVLKADDGGSGQTPGGSTENSVAYRYVAVQQMTSCRDHIEYQLTVREQPKQSRMCGVGEKADRRPIDPAPIVQLRVVTHDRPIRQSDPVGSASVAPPVERRPGQGAAAPQTPGVRRGLPVTTALGDGWEDKAWYLENPYYFMYAMLCNADTDEELHLLNDGKTRYTSGSCVSCLYHLKDIDGSHQGFFVFPDLSIRVEGRYRLKLCLFETIGHSVHHCKSIYSDPFHVYTAKRFPGMEESTRLSKSFAEQGLKVRVRKHPRSRRRGSKRTKDESDASDETPLARHVSPKRARASDVLPMSGLPMSQPIASSRMPRSMDDRFERADYDRTPSMASAYYDVKGAPPSRHAPWEEEEVLRLRESRAWDPMYDAPSALYSHHAREDRVEDRRLPPRDFADGRYMDGDYPPHTRSAAAPLSSMSARAGPSEYSEHVRSVYLRDDPVRSMHGSPHRLSAALPPLPPPLSKTPSHPALVGRGYPESSASLTPAYSRNYPSVPAPAPAPAPMPMRPAPLLSRSYDHIGQQSSGRIYDDYGPRPNVVAHYSGSYDPRDALARGFSPPSPQPGRRSPYASHHPPTQWRSGPPSPSRPSDYHLGRASAVERGYAAARRSPIPSARGIDTPPEAYAGFESNPFPRRSFGVPDAGRPAATYDAPRAPPADLYAPDEGPPSGRLGGIGFAPSSRERLILPPLPVPSPLSAHRGELTPLGTRDRDREAAYIAMPRDRDQGLAPTERYLSPSGYNPRAGELDQRDREWEWECERERERERERKRGPASPEYRRDFAQATMPSKPSSRGHNQPY</sequence>
<evidence type="ECO:0000250" key="1">
    <source>
        <dbReference type="UniProtKB" id="M2TGT8"/>
    </source>
</evidence>
<evidence type="ECO:0000250" key="2">
    <source>
        <dbReference type="UniProtKB" id="Q5BBX1"/>
    </source>
</evidence>
<evidence type="ECO:0000255" key="3">
    <source>
        <dbReference type="PROSITE-ProRule" id="PRU01165"/>
    </source>
</evidence>
<evidence type="ECO:0000256" key="4">
    <source>
        <dbReference type="SAM" id="MobiDB-lite"/>
    </source>
</evidence>
<evidence type="ECO:0000269" key="5">
    <source>
    </source>
</evidence>
<evidence type="ECO:0000303" key="6">
    <source>
    </source>
</evidence>
<evidence type="ECO:0000305" key="7"/>
<feature type="chain" id="PRO_0000435914" description="Spore development regulator umv1">
    <location>
        <begin position="1"/>
        <end position="814"/>
    </location>
</feature>
<feature type="domain" description="Velvet" evidence="3">
    <location>
        <begin position="53"/>
        <end position="274"/>
    </location>
</feature>
<feature type="region of interest" description="Disordered" evidence="4">
    <location>
        <begin position="1"/>
        <end position="36"/>
    </location>
</feature>
<feature type="region of interest" description="Disordered" evidence="4">
    <location>
        <begin position="96"/>
        <end position="134"/>
    </location>
</feature>
<feature type="region of interest" description="Disordered" evidence="4">
    <location>
        <begin position="267"/>
        <end position="333"/>
    </location>
</feature>
<feature type="region of interest" description="Disordered" evidence="4">
    <location>
        <begin position="407"/>
        <end position="441"/>
    </location>
</feature>
<feature type="region of interest" description="Disordered" evidence="4">
    <location>
        <begin position="457"/>
        <end position="501"/>
    </location>
</feature>
<feature type="region of interest" description="Disordered" evidence="4">
    <location>
        <begin position="539"/>
        <end position="814"/>
    </location>
</feature>
<feature type="short sequence motif" description="Nuclear localization signal" evidence="1">
    <location>
        <begin position="438"/>
        <end position="445"/>
    </location>
</feature>
<feature type="compositionally biased region" description="Polar residues" evidence="4">
    <location>
        <begin position="7"/>
        <end position="18"/>
    </location>
</feature>
<feature type="compositionally biased region" description="Basic residues" evidence="4">
    <location>
        <begin position="271"/>
        <end position="285"/>
    </location>
</feature>
<feature type="compositionally biased region" description="Basic and acidic residues" evidence="4">
    <location>
        <begin position="407"/>
        <end position="423"/>
    </location>
</feature>
<feature type="compositionally biased region" description="Low complexity" evidence="4">
    <location>
        <begin position="620"/>
        <end position="631"/>
    </location>
</feature>
<feature type="compositionally biased region" description="Basic and acidic residues" evidence="4">
    <location>
        <begin position="723"/>
        <end position="741"/>
    </location>
</feature>
<feature type="compositionally biased region" description="Basic and acidic residues" evidence="4">
    <location>
        <begin position="760"/>
        <end position="796"/>
    </location>
</feature>
<feature type="compositionally biased region" description="Polar residues" evidence="4">
    <location>
        <begin position="800"/>
        <end position="814"/>
    </location>
</feature>
<keyword id="KW-0539">Nucleus</keyword>
<keyword id="KW-1185">Reference proteome</keyword>
<keyword id="KW-0749">Sporulation</keyword>
<keyword id="KW-0804">Transcription</keyword>
<keyword id="KW-0805">Transcription regulation</keyword>
<keyword id="KW-0843">Virulence</keyword>
<proteinExistence type="inferred from homology"/>